<feature type="chain" id="PRO_0000267307" description="7-methyl-GTP pyrophosphatase">
    <location>
        <begin position="1"/>
        <end position="197"/>
    </location>
</feature>
<feature type="active site" description="Proton acceptor" evidence="1">
    <location>
        <position position="69"/>
    </location>
</feature>
<feature type="site" description="Important for substrate specificity" evidence="1">
    <location>
        <position position="12"/>
    </location>
</feature>
<feature type="site" description="Important for substrate specificity" evidence="1">
    <location>
        <position position="70"/>
    </location>
</feature>
<feature type="site" description="Important for substrate specificity" evidence="1">
    <location>
        <position position="154"/>
    </location>
</feature>
<evidence type="ECO:0000255" key="1">
    <source>
        <dbReference type="HAMAP-Rule" id="MF_00528"/>
    </source>
</evidence>
<comment type="function">
    <text evidence="1">Nucleoside triphosphate pyrophosphatase that hydrolyzes 7-methyl-GTP (m(7)GTP). May have a dual role in cell division arrest and in preventing the incorporation of modified nucleotides into cellular nucleic acids.</text>
</comment>
<comment type="catalytic activity">
    <reaction evidence="1">
        <text>N(7)-methyl-GTP + H2O = N(7)-methyl-GMP + diphosphate + H(+)</text>
        <dbReference type="Rhea" id="RHEA:58744"/>
        <dbReference type="ChEBI" id="CHEBI:15377"/>
        <dbReference type="ChEBI" id="CHEBI:15378"/>
        <dbReference type="ChEBI" id="CHEBI:33019"/>
        <dbReference type="ChEBI" id="CHEBI:58285"/>
        <dbReference type="ChEBI" id="CHEBI:87133"/>
    </reaction>
</comment>
<comment type="cofactor">
    <cofactor evidence="1">
        <name>a divalent metal cation</name>
        <dbReference type="ChEBI" id="CHEBI:60240"/>
    </cofactor>
</comment>
<comment type="subcellular location">
    <subcellularLocation>
        <location evidence="1">Cytoplasm</location>
    </subcellularLocation>
</comment>
<comment type="similarity">
    <text evidence="1">Belongs to the Maf family. YceF subfamily.</text>
</comment>
<reference key="1">
    <citation type="journal article" date="2004" name="Proc. Natl. Acad. Sci. U.S.A.">
        <title>Genome sequence of the enterobacterial phytopathogen Erwinia carotovora subsp. atroseptica and characterization of virulence factors.</title>
        <authorList>
            <person name="Bell K.S."/>
            <person name="Sebaihia M."/>
            <person name="Pritchard L."/>
            <person name="Holden M.T.G."/>
            <person name="Hyman L.J."/>
            <person name="Holeva M.C."/>
            <person name="Thomson N.R."/>
            <person name="Bentley S.D."/>
            <person name="Churcher L.J.C."/>
            <person name="Mungall K."/>
            <person name="Atkin R."/>
            <person name="Bason N."/>
            <person name="Brooks K."/>
            <person name="Chillingworth T."/>
            <person name="Clark K."/>
            <person name="Doggett J."/>
            <person name="Fraser A."/>
            <person name="Hance Z."/>
            <person name="Hauser H."/>
            <person name="Jagels K."/>
            <person name="Moule S."/>
            <person name="Norbertczak H."/>
            <person name="Ormond D."/>
            <person name="Price C."/>
            <person name="Quail M.A."/>
            <person name="Sanders M."/>
            <person name="Walker D."/>
            <person name="Whitehead S."/>
            <person name="Salmond G.P.C."/>
            <person name="Birch P.R.J."/>
            <person name="Parkhill J."/>
            <person name="Toth I.K."/>
        </authorList>
    </citation>
    <scope>NUCLEOTIDE SEQUENCE [LARGE SCALE GENOMIC DNA]</scope>
    <source>
        <strain>SCRI 1043 / ATCC BAA-672</strain>
    </source>
</reference>
<gene>
    <name type="ordered locus">ECA1791</name>
</gene>
<dbReference type="EC" id="3.6.1.-" evidence="1"/>
<dbReference type="EMBL" id="BX950851">
    <property type="protein sequence ID" value="CAG74696.1"/>
    <property type="molecule type" value="Genomic_DNA"/>
</dbReference>
<dbReference type="RefSeq" id="WP_011093367.1">
    <property type="nucleotide sequence ID" value="NC_004547.2"/>
</dbReference>
<dbReference type="SMR" id="Q6D694"/>
<dbReference type="STRING" id="218491.ECA1791"/>
<dbReference type="KEGG" id="eca:ECA1791"/>
<dbReference type="PATRIC" id="fig|218491.5.peg.1819"/>
<dbReference type="eggNOG" id="COG0424">
    <property type="taxonomic scope" value="Bacteria"/>
</dbReference>
<dbReference type="HOGENOM" id="CLU_040416_1_0_6"/>
<dbReference type="OrthoDB" id="9813694at2"/>
<dbReference type="Proteomes" id="UP000007966">
    <property type="component" value="Chromosome"/>
</dbReference>
<dbReference type="GO" id="GO:0005737">
    <property type="term" value="C:cytoplasm"/>
    <property type="evidence" value="ECO:0007669"/>
    <property type="project" value="UniProtKB-SubCell"/>
</dbReference>
<dbReference type="GO" id="GO:0047429">
    <property type="term" value="F:nucleoside triphosphate diphosphatase activity"/>
    <property type="evidence" value="ECO:0007669"/>
    <property type="project" value="InterPro"/>
</dbReference>
<dbReference type="GO" id="GO:0009117">
    <property type="term" value="P:nucleotide metabolic process"/>
    <property type="evidence" value="ECO:0007669"/>
    <property type="project" value="UniProtKB-KW"/>
</dbReference>
<dbReference type="CDD" id="cd00555">
    <property type="entry name" value="Maf"/>
    <property type="match status" value="1"/>
</dbReference>
<dbReference type="FunFam" id="3.90.950.10:FF:000005">
    <property type="entry name" value="7-methyl-GTP pyrophosphatase"/>
    <property type="match status" value="1"/>
</dbReference>
<dbReference type="Gene3D" id="3.90.950.10">
    <property type="match status" value="1"/>
</dbReference>
<dbReference type="HAMAP" id="MF_00528">
    <property type="entry name" value="Maf"/>
    <property type="match status" value="1"/>
</dbReference>
<dbReference type="InterPro" id="IPR029001">
    <property type="entry name" value="ITPase-like_fam"/>
</dbReference>
<dbReference type="InterPro" id="IPR003697">
    <property type="entry name" value="Maf-like"/>
</dbReference>
<dbReference type="NCBIfam" id="TIGR00172">
    <property type="entry name" value="maf"/>
    <property type="match status" value="1"/>
</dbReference>
<dbReference type="PANTHER" id="PTHR43213:SF10">
    <property type="entry name" value="7-METHYL-GTP PYROPHOSPHATASE"/>
    <property type="match status" value="1"/>
</dbReference>
<dbReference type="PANTHER" id="PTHR43213">
    <property type="entry name" value="BIFUNCTIONAL DTTP/UTP PYROPHOSPHATASE/METHYLTRANSFERASE PROTEIN-RELATED"/>
    <property type="match status" value="1"/>
</dbReference>
<dbReference type="Pfam" id="PF02545">
    <property type="entry name" value="Maf"/>
    <property type="match status" value="1"/>
</dbReference>
<dbReference type="PIRSF" id="PIRSF006305">
    <property type="entry name" value="Maf"/>
    <property type="match status" value="1"/>
</dbReference>
<dbReference type="SUPFAM" id="SSF52972">
    <property type="entry name" value="ITPase-like"/>
    <property type="match status" value="1"/>
</dbReference>
<organism>
    <name type="scientific">Pectobacterium atrosepticum (strain SCRI 1043 / ATCC BAA-672)</name>
    <name type="common">Erwinia carotovora subsp. atroseptica</name>
    <dbReference type="NCBI Taxonomy" id="218491"/>
    <lineage>
        <taxon>Bacteria</taxon>
        <taxon>Pseudomonadati</taxon>
        <taxon>Pseudomonadota</taxon>
        <taxon>Gammaproteobacteria</taxon>
        <taxon>Enterobacterales</taxon>
        <taxon>Pectobacteriaceae</taxon>
        <taxon>Pectobacterium</taxon>
    </lineage>
</organism>
<keyword id="KW-0963">Cytoplasm</keyword>
<keyword id="KW-0378">Hydrolase</keyword>
<keyword id="KW-0546">Nucleotide metabolism</keyword>
<keyword id="KW-1185">Reference proteome</keyword>
<protein>
    <recommendedName>
        <fullName evidence="1">7-methyl-GTP pyrophosphatase</fullName>
        <shortName evidence="1">m(7)GTP pyrophosphatase</shortName>
        <ecNumber evidence="1">3.6.1.-</ecNumber>
    </recommendedName>
</protein>
<accession>Q6D694</accession>
<name>NTPPB_PECAS</name>
<proteinExistence type="inferred from homology"/>
<sequence length="197" mass="21606">MQQIVLASTSPYRKALLEKLTVPFVCASPDIDETPRIGENAIDLVIRLAESKARALATHYTNHLIIGSDQVCVLGNSITGKPHNKINATRQLQQASGKCVSFFTGLALFNSATQSIQSIAEPFDVYFRTLTEAEIDGYLEKEQPWNCAGSFKSEGLGITLFERLSGRDPNTLIGLPLIALTQMLQKEGLNPLTVRNE</sequence>